<sequence length="423" mass="47357">MSKKMDRCSFCGRTEREVTQLFQGPGDVFICDSCVESCHSLLRDDMYSLAREYENLRDGKSSNNKNYKGKIELLKPVEIKAKLDEYVVGQDEAKKVLSVAVYNHYKRILNNGQDDDGVELQKSNVLLVGPTGSGKTLLAQTLAKILNVPFAIADATTLTEAGYVGDDVENVLVRLIQACNYDIPNAERGIIYIDEFDKIARKSENVSITRDVSGEGVQQALLKIIEGTKSQVPPEGGRKHPNQELIEIDTKNILFIVGGAFEGLEKIIKARTNKKVIGFGAEVQKQDNMGTEGEFFKKVLPEDLMKQGIIPELVGRLPVITTLDNLDEQTLINILTKPKNAIVKQYQKLCKLEGVKLEFTQEALTEIAKRALKRKMGARGLRAIIEHTMLDIMFELPSNNNIKEITITKDTIDNYKKAEIEYK</sequence>
<evidence type="ECO:0000255" key="1">
    <source>
        <dbReference type="HAMAP-Rule" id="MF_00175"/>
    </source>
</evidence>
<evidence type="ECO:0000255" key="2">
    <source>
        <dbReference type="PROSITE-ProRule" id="PRU01250"/>
    </source>
</evidence>
<dbReference type="EMBL" id="AE009951">
    <property type="protein sequence ID" value="AAL94105.1"/>
    <property type="molecule type" value="Genomic_DNA"/>
</dbReference>
<dbReference type="RefSeq" id="NP_602806.1">
    <property type="nucleotide sequence ID" value="NC_003454.1"/>
</dbReference>
<dbReference type="RefSeq" id="WP_011015984.1">
    <property type="nucleotide sequence ID" value="NZ_CP028101.1"/>
</dbReference>
<dbReference type="SMR" id="Q8RHJ9"/>
<dbReference type="FunCoup" id="Q8RHJ9">
    <property type="interactions" value="285"/>
</dbReference>
<dbReference type="STRING" id="190304.FN2015"/>
<dbReference type="PaxDb" id="190304-FN2015"/>
<dbReference type="EnsemblBacteria" id="AAL94105">
    <property type="protein sequence ID" value="AAL94105"/>
    <property type="gene ID" value="FN2015"/>
</dbReference>
<dbReference type="GeneID" id="79782978"/>
<dbReference type="KEGG" id="fnu:FN2015"/>
<dbReference type="PATRIC" id="fig|190304.8.peg.483"/>
<dbReference type="eggNOG" id="COG1219">
    <property type="taxonomic scope" value="Bacteria"/>
</dbReference>
<dbReference type="HOGENOM" id="CLU_014218_8_2_0"/>
<dbReference type="InParanoid" id="Q8RHJ9"/>
<dbReference type="BioCyc" id="FNUC190304:G1FZS-502-MONOMER"/>
<dbReference type="Proteomes" id="UP000002521">
    <property type="component" value="Chromosome"/>
</dbReference>
<dbReference type="GO" id="GO:0009376">
    <property type="term" value="C:HslUV protease complex"/>
    <property type="evidence" value="ECO:0000318"/>
    <property type="project" value="GO_Central"/>
</dbReference>
<dbReference type="GO" id="GO:0005524">
    <property type="term" value="F:ATP binding"/>
    <property type="evidence" value="ECO:0000318"/>
    <property type="project" value="GO_Central"/>
</dbReference>
<dbReference type="GO" id="GO:0016887">
    <property type="term" value="F:ATP hydrolysis activity"/>
    <property type="evidence" value="ECO:0000318"/>
    <property type="project" value="GO_Central"/>
</dbReference>
<dbReference type="GO" id="GO:0140662">
    <property type="term" value="F:ATP-dependent protein folding chaperone"/>
    <property type="evidence" value="ECO:0007669"/>
    <property type="project" value="InterPro"/>
</dbReference>
<dbReference type="GO" id="GO:0046983">
    <property type="term" value="F:protein dimerization activity"/>
    <property type="evidence" value="ECO:0007669"/>
    <property type="project" value="InterPro"/>
</dbReference>
<dbReference type="GO" id="GO:0051082">
    <property type="term" value="F:unfolded protein binding"/>
    <property type="evidence" value="ECO:0007669"/>
    <property type="project" value="UniProtKB-UniRule"/>
</dbReference>
<dbReference type="GO" id="GO:0008270">
    <property type="term" value="F:zinc ion binding"/>
    <property type="evidence" value="ECO:0007669"/>
    <property type="project" value="InterPro"/>
</dbReference>
<dbReference type="GO" id="GO:0051301">
    <property type="term" value="P:cell division"/>
    <property type="evidence" value="ECO:0000318"/>
    <property type="project" value="GO_Central"/>
</dbReference>
<dbReference type="GO" id="GO:0051603">
    <property type="term" value="P:proteolysis involved in protein catabolic process"/>
    <property type="evidence" value="ECO:0000318"/>
    <property type="project" value="GO_Central"/>
</dbReference>
<dbReference type="CDD" id="cd19497">
    <property type="entry name" value="RecA-like_ClpX"/>
    <property type="match status" value="1"/>
</dbReference>
<dbReference type="FunFam" id="1.10.8.60:FF:000002">
    <property type="entry name" value="ATP-dependent Clp protease ATP-binding subunit ClpX"/>
    <property type="match status" value="1"/>
</dbReference>
<dbReference type="FunFam" id="3.40.50.300:FF:000005">
    <property type="entry name" value="ATP-dependent Clp protease ATP-binding subunit ClpX"/>
    <property type="match status" value="1"/>
</dbReference>
<dbReference type="Gene3D" id="1.10.8.60">
    <property type="match status" value="1"/>
</dbReference>
<dbReference type="Gene3D" id="6.20.220.10">
    <property type="entry name" value="ClpX chaperone, C4-type zinc finger domain"/>
    <property type="match status" value="1"/>
</dbReference>
<dbReference type="Gene3D" id="3.40.50.300">
    <property type="entry name" value="P-loop containing nucleotide triphosphate hydrolases"/>
    <property type="match status" value="1"/>
</dbReference>
<dbReference type="HAMAP" id="MF_00175">
    <property type="entry name" value="ClpX"/>
    <property type="match status" value="1"/>
</dbReference>
<dbReference type="InterPro" id="IPR003593">
    <property type="entry name" value="AAA+_ATPase"/>
</dbReference>
<dbReference type="InterPro" id="IPR050052">
    <property type="entry name" value="ATP-dep_Clp_protease_ClpX"/>
</dbReference>
<dbReference type="InterPro" id="IPR003959">
    <property type="entry name" value="ATPase_AAA_core"/>
</dbReference>
<dbReference type="InterPro" id="IPR019489">
    <property type="entry name" value="Clp_ATPase_C"/>
</dbReference>
<dbReference type="InterPro" id="IPR004487">
    <property type="entry name" value="Clp_protease_ATP-bd_su_ClpX"/>
</dbReference>
<dbReference type="InterPro" id="IPR046425">
    <property type="entry name" value="ClpX_bact"/>
</dbReference>
<dbReference type="InterPro" id="IPR027417">
    <property type="entry name" value="P-loop_NTPase"/>
</dbReference>
<dbReference type="InterPro" id="IPR010603">
    <property type="entry name" value="Znf_CppX_C4"/>
</dbReference>
<dbReference type="InterPro" id="IPR038366">
    <property type="entry name" value="Znf_CppX_C4_sf"/>
</dbReference>
<dbReference type="NCBIfam" id="TIGR00382">
    <property type="entry name" value="clpX"/>
    <property type="match status" value="1"/>
</dbReference>
<dbReference type="NCBIfam" id="NF003745">
    <property type="entry name" value="PRK05342.1"/>
    <property type="match status" value="1"/>
</dbReference>
<dbReference type="PANTHER" id="PTHR48102:SF7">
    <property type="entry name" value="ATP-DEPENDENT CLP PROTEASE ATP-BINDING SUBUNIT CLPX-LIKE, MITOCHONDRIAL"/>
    <property type="match status" value="1"/>
</dbReference>
<dbReference type="PANTHER" id="PTHR48102">
    <property type="entry name" value="ATP-DEPENDENT CLP PROTEASE ATP-BINDING SUBUNIT CLPX-LIKE, MITOCHONDRIAL-RELATED"/>
    <property type="match status" value="1"/>
</dbReference>
<dbReference type="Pfam" id="PF07724">
    <property type="entry name" value="AAA_2"/>
    <property type="match status" value="1"/>
</dbReference>
<dbReference type="Pfam" id="PF10431">
    <property type="entry name" value="ClpB_D2-small"/>
    <property type="match status" value="1"/>
</dbReference>
<dbReference type="Pfam" id="PF06689">
    <property type="entry name" value="zf-C4_ClpX"/>
    <property type="match status" value="1"/>
</dbReference>
<dbReference type="SMART" id="SM00382">
    <property type="entry name" value="AAA"/>
    <property type="match status" value="1"/>
</dbReference>
<dbReference type="SMART" id="SM01086">
    <property type="entry name" value="ClpB_D2-small"/>
    <property type="match status" value="1"/>
</dbReference>
<dbReference type="SMART" id="SM00994">
    <property type="entry name" value="zf-C4_ClpX"/>
    <property type="match status" value="1"/>
</dbReference>
<dbReference type="SUPFAM" id="SSF57716">
    <property type="entry name" value="Glucocorticoid receptor-like (DNA-binding domain)"/>
    <property type="match status" value="1"/>
</dbReference>
<dbReference type="SUPFAM" id="SSF52540">
    <property type="entry name" value="P-loop containing nucleoside triphosphate hydrolases"/>
    <property type="match status" value="1"/>
</dbReference>
<dbReference type="PROSITE" id="PS51902">
    <property type="entry name" value="CLPX_ZB"/>
    <property type="match status" value="1"/>
</dbReference>
<keyword id="KW-0067">ATP-binding</keyword>
<keyword id="KW-0143">Chaperone</keyword>
<keyword id="KW-0479">Metal-binding</keyword>
<keyword id="KW-0547">Nucleotide-binding</keyword>
<keyword id="KW-1185">Reference proteome</keyword>
<keyword id="KW-0862">Zinc</keyword>
<reference key="1">
    <citation type="journal article" date="2002" name="J. Bacteriol.">
        <title>Genome sequence and analysis of the oral bacterium Fusobacterium nucleatum strain ATCC 25586.</title>
        <authorList>
            <person name="Kapatral V."/>
            <person name="Anderson I."/>
            <person name="Ivanova N."/>
            <person name="Reznik G."/>
            <person name="Los T."/>
            <person name="Lykidis A."/>
            <person name="Bhattacharyya A."/>
            <person name="Bartman A."/>
            <person name="Gardner W."/>
            <person name="Grechkin G."/>
            <person name="Zhu L."/>
            <person name="Vasieva O."/>
            <person name="Chu L."/>
            <person name="Kogan Y."/>
            <person name="Chaga O."/>
            <person name="Goltsman E."/>
            <person name="Bernal A."/>
            <person name="Larsen N."/>
            <person name="D'Souza M."/>
            <person name="Walunas T."/>
            <person name="Pusch G."/>
            <person name="Haselkorn R."/>
            <person name="Fonstein M."/>
            <person name="Kyrpides N.C."/>
            <person name="Overbeek R."/>
        </authorList>
    </citation>
    <scope>NUCLEOTIDE SEQUENCE [LARGE SCALE GENOMIC DNA]</scope>
    <source>
        <strain>ATCC 25586 / DSM 15643 / BCRC 10681 / CIP 101130 / JCM 8532 / KCTC 2640 / LMG 13131 / VPI 4355</strain>
    </source>
</reference>
<comment type="function">
    <text evidence="1">ATP-dependent specificity component of the Clp protease. It directs the protease to specific substrates. Can perform chaperone functions in the absence of ClpP.</text>
</comment>
<comment type="subunit">
    <text evidence="1">Component of the ClpX-ClpP complex. Forms a hexameric ring that, in the presence of ATP, binds to fourteen ClpP subunits assembled into a disk-like structure with a central cavity, resembling the structure of eukaryotic proteasomes.</text>
</comment>
<comment type="similarity">
    <text evidence="1">Belongs to the ClpX chaperone family.</text>
</comment>
<protein>
    <recommendedName>
        <fullName evidence="1">ATP-dependent Clp protease ATP-binding subunit ClpX</fullName>
    </recommendedName>
</protein>
<gene>
    <name evidence="1" type="primary">clpX</name>
    <name type="ordered locus">FN2015</name>
</gene>
<name>CLPX_FUSNN</name>
<organism>
    <name type="scientific">Fusobacterium nucleatum subsp. nucleatum (strain ATCC 25586 / DSM 15643 / BCRC 10681 / CIP 101130 / JCM 8532 / KCTC 2640 / LMG 13131 / VPI 4355)</name>
    <dbReference type="NCBI Taxonomy" id="190304"/>
    <lineage>
        <taxon>Bacteria</taxon>
        <taxon>Fusobacteriati</taxon>
        <taxon>Fusobacteriota</taxon>
        <taxon>Fusobacteriia</taxon>
        <taxon>Fusobacteriales</taxon>
        <taxon>Fusobacteriaceae</taxon>
        <taxon>Fusobacterium</taxon>
    </lineage>
</organism>
<proteinExistence type="inferred from homology"/>
<feature type="chain" id="PRO_0000160358" description="ATP-dependent Clp protease ATP-binding subunit ClpX">
    <location>
        <begin position="1"/>
        <end position="423"/>
    </location>
</feature>
<feature type="domain" description="ClpX-type ZB" evidence="2">
    <location>
        <begin position="1"/>
        <end position="50"/>
    </location>
</feature>
<feature type="binding site" evidence="2">
    <location>
        <position position="8"/>
    </location>
    <ligand>
        <name>Zn(2+)</name>
        <dbReference type="ChEBI" id="CHEBI:29105"/>
    </ligand>
</feature>
<feature type="binding site" evidence="2">
    <location>
        <position position="11"/>
    </location>
    <ligand>
        <name>Zn(2+)</name>
        <dbReference type="ChEBI" id="CHEBI:29105"/>
    </ligand>
</feature>
<feature type="binding site" evidence="2">
    <location>
        <position position="31"/>
    </location>
    <ligand>
        <name>Zn(2+)</name>
        <dbReference type="ChEBI" id="CHEBI:29105"/>
    </ligand>
</feature>
<feature type="binding site" evidence="2">
    <location>
        <position position="34"/>
    </location>
    <ligand>
        <name>Zn(2+)</name>
        <dbReference type="ChEBI" id="CHEBI:29105"/>
    </ligand>
</feature>
<feature type="binding site" evidence="1">
    <location>
        <begin position="130"/>
        <end position="137"/>
    </location>
    <ligand>
        <name>ATP</name>
        <dbReference type="ChEBI" id="CHEBI:30616"/>
    </ligand>
</feature>
<accession>Q8RHJ9</accession>